<feature type="initiator methionine" description="Removed" evidence="2">
    <location>
        <position position="1"/>
    </location>
</feature>
<feature type="chain" id="PRO_0000072719" description="Putative NAD(P)H nitroreductase YfkO">
    <location>
        <begin position="2"/>
        <end position="221"/>
    </location>
</feature>
<feature type="binding site" evidence="1">
    <location>
        <begin position="15"/>
        <end position="17"/>
    </location>
    <ligand>
        <name>FMN</name>
        <dbReference type="ChEBI" id="CHEBI:58210"/>
    </ligand>
</feature>
<feature type="binding site" evidence="1">
    <location>
        <begin position="73"/>
        <end position="75"/>
    </location>
    <ligand>
        <name>FMN</name>
        <dbReference type="ChEBI" id="CHEBI:58210"/>
    </ligand>
</feature>
<feature type="binding site" evidence="1">
    <location>
        <begin position="157"/>
        <end position="162"/>
    </location>
    <ligand>
        <name>NAD(+)</name>
        <dbReference type="ChEBI" id="CHEBI:57540"/>
    </ligand>
</feature>
<feature type="binding site" evidence="1">
    <location>
        <begin position="169"/>
        <end position="170"/>
    </location>
    <ligand>
        <name>FMN</name>
        <dbReference type="ChEBI" id="CHEBI:58210"/>
    </ligand>
</feature>
<feature type="binding site" evidence="1">
    <location>
        <position position="211"/>
    </location>
    <ligand>
        <name>FMN</name>
        <dbReference type="ChEBI" id="CHEBI:58210"/>
    </ligand>
</feature>
<comment type="cofactor">
    <cofactor evidence="2">
        <name>FMN</name>
        <dbReference type="ChEBI" id="CHEBI:58210"/>
    </cofactor>
</comment>
<comment type="subunit">
    <text evidence="2">Monomer.</text>
</comment>
<comment type="similarity">
    <text evidence="3">Belongs to the nitroreductase family.</text>
</comment>
<gene>
    <name type="primary">yfkO</name>
    <name type="ordered locus">BSU07830</name>
</gene>
<name>YFKO_BACSU</name>
<evidence type="ECO:0000250" key="1"/>
<evidence type="ECO:0000269" key="2">
    <source>
    </source>
</evidence>
<evidence type="ECO:0000305" key="3"/>
<accession>O34475</accession>
<sequence>MADLKTQILDAYNFRHATKEFDPNKKVSDSDFEFILETGRLSPSSLGLEPWKFVVVQNPEFREKLREYTWGAQKQLPTASHFVLILARTAKDIKYNADYIKRHLKEVKQMPQDVYEGYLSKTEEFQKNDLHLLESDRTLFDWASKQTYIALGNMMTAAAQIGVDSCPIEGFQYDHIHRILEEEGLLENGSFDISVMVAFGYRVRDPRPKTRSAVEDVVKWV</sequence>
<proteinExistence type="evidence at protein level"/>
<keyword id="KW-0903">Direct protein sequencing</keyword>
<keyword id="KW-0285">Flavoprotein</keyword>
<keyword id="KW-0288">FMN</keyword>
<keyword id="KW-0520">NAD</keyword>
<keyword id="KW-0521">NADP</keyword>
<keyword id="KW-0560">Oxidoreductase</keyword>
<keyword id="KW-1185">Reference proteome</keyword>
<dbReference type="EC" id="1.-.-.-"/>
<dbReference type="EMBL" id="D83967">
    <property type="protein sequence ID" value="BAA23405.1"/>
    <property type="molecule type" value="Genomic_DNA"/>
</dbReference>
<dbReference type="EMBL" id="AL009126">
    <property type="protein sequence ID" value="CAB12612.1"/>
    <property type="molecule type" value="Genomic_DNA"/>
</dbReference>
<dbReference type="PIR" id="B69809">
    <property type="entry name" value="B69809"/>
</dbReference>
<dbReference type="RefSeq" id="WP_003243096.1">
    <property type="nucleotide sequence ID" value="NZ_OZ025638.1"/>
</dbReference>
<dbReference type="SMR" id="O34475"/>
<dbReference type="FunCoup" id="O34475">
    <property type="interactions" value="25"/>
</dbReference>
<dbReference type="STRING" id="224308.BSU07830"/>
<dbReference type="PaxDb" id="224308-BSU07830"/>
<dbReference type="EnsemblBacteria" id="CAB12612">
    <property type="protein sequence ID" value="CAB12612"/>
    <property type="gene ID" value="BSU_07830"/>
</dbReference>
<dbReference type="GeneID" id="939189"/>
<dbReference type="KEGG" id="bsu:BSU07830"/>
<dbReference type="PATRIC" id="fig|224308.179.peg.847"/>
<dbReference type="eggNOG" id="COG0778">
    <property type="taxonomic scope" value="Bacteria"/>
</dbReference>
<dbReference type="InParanoid" id="O34475"/>
<dbReference type="OrthoDB" id="9809288at2"/>
<dbReference type="PhylomeDB" id="O34475"/>
<dbReference type="BioCyc" id="BSUB:BSU07830-MONOMER"/>
<dbReference type="SABIO-RK" id="O34475"/>
<dbReference type="Proteomes" id="UP000001570">
    <property type="component" value="Chromosome"/>
</dbReference>
<dbReference type="GO" id="GO:0005829">
    <property type="term" value="C:cytosol"/>
    <property type="evidence" value="ECO:0000318"/>
    <property type="project" value="GO_Central"/>
</dbReference>
<dbReference type="GO" id="GO:0016491">
    <property type="term" value="F:oxidoreductase activity"/>
    <property type="evidence" value="ECO:0000318"/>
    <property type="project" value="GO_Central"/>
</dbReference>
<dbReference type="GO" id="GO:0046256">
    <property type="term" value="P:2,4,6-trinitrotoluene catabolic process"/>
    <property type="evidence" value="ECO:0000318"/>
    <property type="project" value="GO_Central"/>
</dbReference>
<dbReference type="CDD" id="cd02149">
    <property type="entry name" value="NfsB-like"/>
    <property type="match status" value="1"/>
</dbReference>
<dbReference type="FunFam" id="3.40.109.10:FF:000008">
    <property type="entry name" value="Putative NAD(P)H nitroreductase"/>
    <property type="match status" value="1"/>
</dbReference>
<dbReference type="Gene3D" id="3.40.109.10">
    <property type="entry name" value="NADH Oxidase"/>
    <property type="match status" value="1"/>
</dbReference>
<dbReference type="InterPro" id="IPR033878">
    <property type="entry name" value="NfsB-like"/>
</dbReference>
<dbReference type="InterPro" id="IPR029479">
    <property type="entry name" value="Nitroreductase"/>
</dbReference>
<dbReference type="InterPro" id="IPR000415">
    <property type="entry name" value="Nitroreductase-like"/>
</dbReference>
<dbReference type="InterPro" id="IPR050627">
    <property type="entry name" value="Nitroreductase/BluB"/>
</dbReference>
<dbReference type="PANTHER" id="PTHR23026">
    <property type="entry name" value="NADPH NITROREDUCTASE"/>
    <property type="match status" value="1"/>
</dbReference>
<dbReference type="PANTHER" id="PTHR23026:SF125">
    <property type="entry name" value="OXYGEN-INSENSITIVE NAD(P)H NITROREDUCTASE"/>
    <property type="match status" value="1"/>
</dbReference>
<dbReference type="Pfam" id="PF00881">
    <property type="entry name" value="Nitroreductase"/>
    <property type="match status" value="1"/>
</dbReference>
<dbReference type="SUPFAM" id="SSF55469">
    <property type="entry name" value="FMN-dependent nitroreductase-like"/>
    <property type="match status" value="1"/>
</dbReference>
<reference key="1">
    <citation type="submission" date="1997-11" db="EMBL/GenBank/DDBJ databases">
        <title>Nucleotide sequence analysis of B. subtilis chromosome in 74 degree region.</title>
        <authorList>
            <person name="Sekiguchi J."/>
            <person name="Yamamoto H."/>
            <person name="Uchiyama S."/>
            <person name="Fajar A."/>
        </authorList>
    </citation>
    <scope>NUCLEOTIDE SEQUENCE [GENOMIC DNA]</scope>
    <source>
        <strain>168 / AC327</strain>
    </source>
</reference>
<reference key="2">
    <citation type="journal article" date="1997" name="Nature">
        <title>The complete genome sequence of the Gram-positive bacterium Bacillus subtilis.</title>
        <authorList>
            <person name="Kunst F."/>
            <person name="Ogasawara N."/>
            <person name="Moszer I."/>
            <person name="Albertini A.M."/>
            <person name="Alloni G."/>
            <person name="Azevedo V."/>
            <person name="Bertero M.G."/>
            <person name="Bessieres P."/>
            <person name="Bolotin A."/>
            <person name="Borchert S."/>
            <person name="Borriss R."/>
            <person name="Boursier L."/>
            <person name="Brans A."/>
            <person name="Braun M."/>
            <person name="Brignell S.C."/>
            <person name="Bron S."/>
            <person name="Brouillet S."/>
            <person name="Bruschi C.V."/>
            <person name="Caldwell B."/>
            <person name="Capuano V."/>
            <person name="Carter N.M."/>
            <person name="Choi S.-K."/>
            <person name="Codani J.-J."/>
            <person name="Connerton I.F."/>
            <person name="Cummings N.J."/>
            <person name="Daniel R.A."/>
            <person name="Denizot F."/>
            <person name="Devine K.M."/>
            <person name="Duesterhoeft A."/>
            <person name="Ehrlich S.D."/>
            <person name="Emmerson P.T."/>
            <person name="Entian K.-D."/>
            <person name="Errington J."/>
            <person name="Fabret C."/>
            <person name="Ferrari E."/>
            <person name="Foulger D."/>
            <person name="Fritz C."/>
            <person name="Fujita M."/>
            <person name="Fujita Y."/>
            <person name="Fuma S."/>
            <person name="Galizzi A."/>
            <person name="Galleron N."/>
            <person name="Ghim S.-Y."/>
            <person name="Glaser P."/>
            <person name="Goffeau A."/>
            <person name="Golightly E.J."/>
            <person name="Grandi G."/>
            <person name="Guiseppi G."/>
            <person name="Guy B.J."/>
            <person name="Haga K."/>
            <person name="Haiech J."/>
            <person name="Harwood C.R."/>
            <person name="Henaut A."/>
            <person name="Hilbert H."/>
            <person name="Holsappel S."/>
            <person name="Hosono S."/>
            <person name="Hullo M.-F."/>
            <person name="Itaya M."/>
            <person name="Jones L.-M."/>
            <person name="Joris B."/>
            <person name="Karamata D."/>
            <person name="Kasahara Y."/>
            <person name="Klaerr-Blanchard M."/>
            <person name="Klein C."/>
            <person name="Kobayashi Y."/>
            <person name="Koetter P."/>
            <person name="Koningstein G."/>
            <person name="Krogh S."/>
            <person name="Kumano M."/>
            <person name="Kurita K."/>
            <person name="Lapidus A."/>
            <person name="Lardinois S."/>
            <person name="Lauber J."/>
            <person name="Lazarevic V."/>
            <person name="Lee S.-M."/>
            <person name="Levine A."/>
            <person name="Liu H."/>
            <person name="Masuda S."/>
            <person name="Mauel C."/>
            <person name="Medigue C."/>
            <person name="Medina N."/>
            <person name="Mellado R.P."/>
            <person name="Mizuno M."/>
            <person name="Moestl D."/>
            <person name="Nakai S."/>
            <person name="Noback M."/>
            <person name="Noone D."/>
            <person name="O'Reilly M."/>
            <person name="Ogawa K."/>
            <person name="Ogiwara A."/>
            <person name="Oudega B."/>
            <person name="Park S.-H."/>
            <person name="Parro V."/>
            <person name="Pohl T.M."/>
            <person name="Portetelle D."/>
            <person name="Porwollik S."/>
            <person name="Prescott A.M."/>
            <person name="Presecan E."/>
            <person name="Pujic P."/>
            <person name="Purnelle B."/>
            <person name="Rapoport G."/>
            <person name="Rey M."/>
            <person name="Reynolds S."/>
            <person name="Rieger M."/>
            <person name="Rivolta C."/>
            <person name="Rocha E."/>
            <person name="Roche B."/>
            <person name="Rose M."/>
            <person name="Sadaie Y."/>
            <person name="Sato T."/>
            <person name="Scanlan E."/>
            <person name="Schleich S."/>
            <person name="Schroeter R."/>
            <person name="Scoffone F."/>
            <person name="Sekiguchi J."/>
            <person name="Sekowska A."/>
            <person name="Seror S.J."/>
            <person name="Serror P."/>
            <person name="Shin B.-S."/>
            <person name="Soldo B."/>
            <person name="Sorokin A."/>
            <person name="Tacconi E."/>
            <person name="Takagi T."/>
            <person name="Takahashi H."/>
            <person name="Takemaru K."/>
            <person name="Takeuchi M."/>
            <person name="Tamakoshi A."/>
            <person name="Tanaka T."/>
            <person name="Terpstra P."/>
            <person name="Tognoni A."/>
            <person name="Tosato V."/>
            <person name="Uchiyama S."/>
            <person name="Vandenbol M."/>
            <person name="Vannier F."/>
            <person name="Vassarotti A."/>
            <person name="Viari A."/>
            <person name="Wambutt R."/>
            <person name="Wedler E."/>
            <person name="Wedler H."/>
            <person name="Weitzenegger T."/>
            <person name="Winters P."/>
            <person name="Wipat A."/>
            <person name="Yamamoto H."/>
            <person name="Yamane K."/>
            <person name="Yasumoto K."/>
            <person name="Yata K."/>
            <person name="Yoshida K."/>
            <person name="Yoshikawa H.-F."/>
            <person name="Zumstein E."/>
            <person name="Yoshikawa H."/>
            <person name="Danchin A."/>
        </authorList>
    </citation>
    <scope>NUCLEOTIDE SEQUENCE [LARGE SCALE GENOMIC DNA]</scope>
    <source>
        <strain>168</strain>
    </source>
</reference>
<reference key="3">
    <citation type="journal article" date="2004" name="Arch. Microbiol.">
        <title>Purification and characterization of ferredoxin-NADP+ reductase encoded by Bacillus subtilis yumC.</title>
        <authorList>
            <person name="Seo D."/>
            <person name="Kamino K."/>
            <person name="Inoue K."/>
            <person name="Sakurai H."/>
        </authorList>
    </citation>
    <scope>PROTEIN SEQUENCE OF 2-21</scope>
    <scope>SUBUNIT</scope>
    <scope>COFACTOR</scope>
</reference>
<protein>
    <recommendedName>
        <fullName>Putative NAD(P)H nitroreductase YfkO</fullName>
        <ecNumber>1.-.-.-</ecNumber>
    </recommendedName>
</protein>
<organism>
    <name type="scientific">Bacillus subtilis (strain 168)</name>
    <dbReference type="NCBI Taxonomy" id="224308"/>
    <lineage>
        <taxon>Bacteria</taxon>
        <taxon>Bacillati</taxon>
        <taxon>Bacillota</taxon>
        <taxon>Bacilli</taxon>
        <taxon>Bacillales</taxon>
        <taxon>Bacillaceae</taxon>
        <taxon>Bacillus</taxon>
    </lineage>
</organism>